<keyword id="KW-0131">Cell cycle</keyword>
<keyword id="KW-0132">Cell division</keyword>
<keyword id="KW-0997">Cell inner membrane</keyword>
<keyword id="KW-1003">Cell membrane</keyword>
<keyword id="KW-0133">Cell shape</keyword>
<keyword id="KW-0961">Cell wall biogenesis/degradation</keyword>
<keyword id="KW-0460">Magnesium</keyword>
<keyword id="KW-0472">Membrane</keyword>
<keyword id="KW-0479">Metal-binding</keyword>
<keyword id="KW-0573">Peptidoglycan synthesis</keyword>
<keyword id="KW-1185">Reference proteome</keyword>
<keyword id="KW-0808">Transferase</keyword>
<keyword id="KW-0812">Transmembrane</keyword>
<keyword id="KW-1133">Transmembrane helix</keyword>
<gene>
    <name evidence="1" type="primary">mraY</name>
    <name type="ordered locus">SARI_02876</name>
</gene>
<protein>
    <recommendedName>
        <fullName evidence="1">Phospho-N-acetylmuramoyl-pentapeptide-transferase</fullName>
        <ecNumber evidence="1">2.7.8.13</ecNumber>
    </recommendedName>
    <alternativeName>
        <fullName evidence="1">UDP-MurNAc-pentapeptide phosphotransferase</fullName>
    </alternativeName>
</protein>
<evidence type="ECO:0000255" key="1">
    <source>
        <dbReference type="HAMAP-Rule" id="MF_00038"/>
    </source>
</evidence>
<organism>
    <name type="scientific">Salmonella arizonae (strain ATCC BAA-731 / CDC346-86 / RSK2980)</name>
    <dbReference type="NCBI Taxonomy" id="41514"/>
    <lineage>
        <taxon>Bacteria</taxon>
        <taxon>Pseudomonadati</taxon>
        <taxon>Pseudomonadota</taxon>
        <taxon>Gammaproteobacteria</taxon>
        <taxon>Enterobacterales</taxon>
        <taxon>Enterobacteriaceae</taxon>
        <taxon>Salmonella</taxon>
    </lineage>
</organism>
<sequence>MLVWLAEHLVKYYSGFNVFSYLTFRAIVSLLTALFISLWMGPRMIARLQKLSFGQVVRNDGPESHFSKRGTPTMGGIMILTAIVISVLLWAYPSNPYVWCVLVVLIGYGIIGFVDDYRKVVRKDTKGLIARWKYFWMSVIALGVAFALYLVGKDTPATQLVVPFFKDVMPQLGLFYILLSYFVIVGTGNAVNLTDGLDGLAIMPTVFVAAGFALVAWATGNMNFANYLHIPYLRHAGELVIVCTAIVGAGLGFLWFNTYPAQVFMGDVGSLALGGALGIIAVLLRQEFLLVIMGGVFVVETLSVILQVGSFKLRGQRIFRMAPIHHHYELKGWPEPRVIVRFWIISLMLVLIGLATLKVR</sequence>
<name>MRAY_SALAR</name>
<proteinExistence type="inferred from homology"/>
<reference key="1">
    <citation type="submission" date="2007-11" db="EMBL/GenBank/DDBJ databases">
        <authorList>
            <consortium name="The Salmonella enterica serovar Arizonae Genome Sequencing Project"/>
            <person name="McClelland M."/>
            <person name="Sanderson E.K."/>
            <person name="Porwollik S."/>
            <person name="Spieth J."/>
            <person name="Clifton W.S."/>
            <person name="Fulton R."/>
            <person name="Chunyan W."/>
            <person name="Wollam A."/>
            <person name="Shah N."/>
            <person name="Pepin K."/>
            <person name="Bhonagiri V."/>
            <person name="Nash W."/>
            <person name="Johnson M."/>
            <person name="Thiruvilangam P."/>
            <person name="Wilson R."/>
        </authorList>
    </citation>
    <scope>NUCLEOTIDE SEQUENCE [LARGE SCALE GENOMIC DNA]</scope>
    <source>
        <strain>ATCC BAA-731 / CDC346-86 / RSK2980</strain>
    </source>
</reference>
<comment type="function">
    <text evidence="1">Catalyzes the initial step of the lipid cycle reactions in the biosynthesis of the cell wall peptidoglycan: transfers peptidoglycan precursor phospho-MurNAc-pentapeptide from UDP-MurNAc-pentapeptide onto the lipid carrier undecaprenyl phosphate, yielding undecaprenyl-pyrophosphoryl-MurNAc-pentapeptide, known as lipid I.</text>
</comment>
<comment type="catalytic activity">
    <reaction evidence="1">
        <text>UDP-N-acetyl-alpha-D-muramoyl-L-alanyl-gamma-D-glutamyl-meso-2,6-diaminopimeloyl-D-alanyl-D-alanine + di-trans,octa-cis-undecaprenyl phosphate = di-trans,octa-cis-undecaprenyl diphospho-N-acetyl-alpha-D-muramoyl-L-alanyl-D-glutamyl-meso-2,6-diaminopimeloyl-D-alanyl-D-alanine + UMP</text>
        <dbReference type="Rhea" id="RHEA:28386"/>
        <dbReference type="ChEBI" id="CHEBI:57865"/>
        <dbReference type="ChEBI" id="CHEBI:60392"/>
        <dbReference type="ChEBI" id="CHEBI:61386"/>
        <dbReference type="ChEBI" id="CHEBI:61387"/>
        <dbReference type="EC" id="2.7.8.13"/>
    </reaction>
</comment>
<comment type="cofactor">
    <cofactor evidence="1">
        <name>Mg(2+)</name>
        <dbReference type="ChEBI" id="CHEBI:18420"/>
    </cofactor>
</comment>
<comment type="pathway">
    <text evidence="1">Cell wall biogenesis; peptidoglycan biosynthesis.</text>
</comment>
<comment type="subcellular location">
    <subcellularLocation>
        <location evidence="1">Cell inner membrane</location>
        <topology evidence="1">Multi-pass membrane protein</topology>
    </subcellularLocation>
</comment>
<comment type="similarity">
    <text evidence="1">Belongs to the glycosyltransferase 4 family. MraY subfamily.</text>
</comment>
<dbReference type="EC" id="2.7.8.13" evidence="1"/>
<dbReference type="EMBL" id="CP000880">
    <property type="protein sequence ID" value="ABX22723.1"/>
    <property type="molecule type" value="Genomic_DNA"/>
</dbReference>
<dbReference type="SMR" id="A9MQC5"/>
<dbReference type="STRING" id="41514.SARI_02876"/>
<dbReference type="KEGG" id="ses:SARI_02876"/>
<dbReference type="HOGENOM" id="CLU_023982_0_0_6"/>
<dbReference type="UniPathway" id="UPA00219"/>
<dbReference type="Proteomes" id="UP000002084">
    <property type="component" value="Chromosome"/>
</dbReference>
<dbReference type="GO" id="GO:0005886">
    <property type="term" value="C:plasma membrane"/>
    <property type="evidence" value="ECO:0007669"/>
    <property type="project" value="UniProtKB-SubCell"/>
</dbReference>
<dbReference type="GO" id="GO:0046872">
    <property type="term" value="F:metal ion binding"/>
    <property type="evidence" value="ECO:0007669"/>
    <property type="project" value="UniProtKB-KW"/>
</dbReference>
<dbReference type="GO" id="GO:0008963">
    <property type="term" value="F:phospho-N-acetylmuramoyl-pentapeptide-transferase activity"/>
    <property type="evidence" value="ECO:0007669"/>
    <property type="project" value="UniProtKB-UniRule"/>
</dbReference>
<dbReference type="GO" id="GO:0051992">
    <property type="term" value="F:UDP-N-acetylmuramoyl-L-alanyl-D-glutamyl-meso-2,6-diaminopimelyl-D-alanyl-D-alanine:undecaprenyl-phosphate transferase activity"/>
    <property type="evidence" value="ECO:0007669"/>
    <property type="project" value="RHEA"/>
</dbReference>
<dbReference type="GO" id="GO:0051301">
    <property type="term" value="P:cell division"/>
    <property type="evidence" value="ECO:0007669"/>
    <property type="project" value="UniProtKB-KW"/>
</dbReference>
<dbReference type="GO" id="GO:0071555">
    <property type="term" value="P:cell wall organization"/>
    <property type="evidence" value="ECO:0007669"/>
    <property type="project" value="UniProtKB-KW"/>
</dbReference>
<dbReference type="GO" id="GO:0009252">
    <property type="term" value="P:peptidoglycan biosynthetic process"/>
    <property type="evidence" value="ECO:0007669"/>
    <property type="project" value="UniProtKB-UniRule"/>
</dbReference>
<dbReference type="GO" id="GO:0008360">
    <property type="term" value="P:regulation of cell shape"/>
    <property type="evidence" value="ECO:0007669"/>
    <property type="project" value="UniProtKB-KW"/>
</dbReference>
<dbReference type="CDD" id="cd06852">
    <property type="entry name" value="GT_MraY"/>
    <property type="match status" value="1"/>
</dbReference>
<dbReference type="HAMAP" id="MF_00038">
    <property type="entry name" value="MraY"/>
    <property type="match status" value="1"/>
</dbReference>
<dbReference type="InterPro" id="IPR000715">
    <property type="entry name" value="Glycosyl_transferase_4"/>
</dbReference>
<dbReference type="InterPro" id="IPR003524">
    <property type="entry name" value="PNAcMuramoyl-5peptid_Trfase"/>
</dbReference>
<dbReference type="InterPro" id="IPR018480">
    <property type="entry name" value="PNAcMuramoyl-5peptid_Trfase_CS"/>
</dbReference>
<dbReference type="NCBIfam" id="TIGR00445">
    <property type="entry name" value="mraY"/>
    <property type="match status" value="1"/>
</dbReference>
<dbReference type="PANTHER" id="PTHR22926">
    <property type="entry name" value="PHOSPHO-N-ACETYLMURAMOYL-PENTAPEPTIDE-TRANSFERASE"/>
    <property type="match status" value="1"/>
</dbReference>
<dbReference type="PANTHER" id="PTHR22926:SF5">
    <property type="entry name" value="PHOSPHO-N-ACETYLMURAMOYL-PENTAPEPTIDE-TRANSFERASE HOMOLOG"/>
    <property type="match status" value="1"/>
</dbReference>
<dbReference type="Pfam" id="PF00953">
    <property type="entry name" value="Glycos_transf_4"/>
    <property type="match status" value="1"/>
</dbReference>
<dbReference type="Pfam" id="PF10555">
    <property type="entry name" value="MraY_sig1"/>
    <property type="match status" value="1"/>
</dbReference>
<dbReference type="PROSITE" id="PS01347">
    <property type="entry name" value="MRAY_1"/>
    <property type="match status" value="1"/>
</dbReference>
<dbReference type="PROSITE" id="PS01348">
    <property type="entry name" value="MRAY_2"/>
    <property type="match status" value="1"/>
</dbReference>
<feature type="chain" id="PRO_1000074557" description="Phospho-N-acetylmuramoyl-pentapeptide-transferase">
    <location>
        <begin position="1"/>
        <end position="360"/>
    </location>
</feature>
<feature type="topological domain" description="Periplasmic" evidence="1">
    <location>
        <begin position="1"/>
        <end position="25"/>
    </location>
</feature>
<feature type="transmembrane region" description="Helical" evidence="1">
    <location>
        <begin position="26"/>
        <end position="46"/>
    </location>
</feature>
<feature type="topological domain" description="Cytoplasmic" evidence="1">
    <location>
        <begin position="47"/>
        <end position="71"/>
    </location>
</feature>
<feature type="transmembrane region" description="Helical" evidence="1">
    <location>
        <begin position="72"/>
        <end position="92"/>
    </location>
</feature>
<feature type="topological domain" description="Periplasmic" evidence="1">
    <location>
        <position position="93"/>
    </location>
</feature>
<feature type="transmembrane region" description="Helical" evidence="1">
    <location>
        <begin position="94"/>
        <end position="114"/>
    </location>
</feature>
<feature type="topological domain" description="Cytoplasmic" evidence="1">
    <location>
        <begin position="115"/>
        <end position="131"/>
    </location>
</feature>
<feature type="transmembrane region" description="Helical" evidence="1">
    <location>
        <begin position="132"/>
        <end position="152"/>
    </location>
</feature>
<feature type="topological domain" description="Periplasmic" evidence="1">
    <location>
        <begin position="153"/>
        <end position="167"/>
    </location>
</feature>
<feature type="transmembrane region" description="Helical" evidence="1">
    <location>
        <begin position="168"/>
        <end position="188"/>
    </location>
</feature>
<feature type="topological domain" description="Cytoplasmic" evidence="1">
    <location>
        <begin position="189"/>
        <end position="198"/>
    </location>
</feature>
<feature type="transmembrane region" description="Helical" evidence="1">
    <location>
        <begin position="199"/>
        <end position="219"/>
    </location>
</feature>
<feature type="topological domain" description="Periplasmic" evidence="1">
    <location>
        <begin position="220"/>
        <end position="235"/>
    </location>
</feature>
<feature type="transmembrane region" description="Helical" evidence="1">
    <location>
        <begin position="236"/>
        <end position="256"/>
    </location>
</feature>
<feature type="topological domain" description="Cytoplasmic" evidence="1">
    <location>
        <begin position="257"/>
        <end position="262"/>
    </location>
</feature>
<feature type="transmembrane region" description="Helical" evidence="1">
    <location>
        <begin position="263"/>
        <end position="283"/>
    </location>
</feature>
<feature type="topological domain" description="Periplasmic" evidence="1">
    <location>
        <begin position="284"/>
        <end position="287"/>
    </location>
</feature>
<feature type="transmembrane region" description="Helical" evidence="1">
    <location>
        <begin position="288"/>
        <end position="308"/>
    </location>
</feature>
<feature type="topological domain" description="Cytoplasmic" evidence="1">
    <location>
        <begin position="309"/>
        <end position="337"/>
    </location>
</feature>
<feature type="transmembrane region" description="Helical" evidence="1">
    <location>
        <begin position="338"/>
        <end position="358"/>
    </location>
</feature>
<feature type="topological domain" description="Periplasmic" evidence="1">
    <location>
        <begin position="359"/>
        <end position="360"/>
    </location>
</feature>
<accession>A9MQC5</accession>